<sequence length="346" mass="36365">MLVLGIESSCDETGLALYDTQRGLLAHALHSQIAMHRDYGGVVPELASRDHIRRALPLLEEVIAKSGARREDIDAIAFTQGPGLAGALLVGASIANALALAWNKPTVGIHHLEGHLLSPLLVAEPPPFPFVALLVSGGHTQLMRVTDVGVYETLGETLDDAAGEAFDKTAKLIGLGYPGGPEVSKLAETGTPGAVVLPRPMLHSGDLDFSFSGLKTAVLTQMKKFEAAQLSGDALARAKADLARGFVDAAVDVLVAKSLAALKKTKLKRLVVAGGVGANRQLRAALSAAAAKRGFDVHYPDLALCTDNGAMIALAGALRLARWPEQANVDYAFTVKPRWDLASLAR</sequence>
<evidence type="ECO:0000255" key="1">
    <source>
        <dbReference type="HAMAP-Rule" id="MF_01445"/>
    </source>
</evidence>
<comment type="function">
    <text evidence="1">Required for the formation of a threonylcarbamoyl group on adenosine at position 37 (t(6)A37) in tRNAs that read codons beginning with adenine. Is involved in the transfer of the threonylcarbamoyl moiety of threonylcarbamoyl-AMP (TC-AMP) to the N6 group of A37, together with TsaE and TsaB. TsaD likely plays a direct catalytic role in this reaction.</text>
</comment>
<comment type="catalytic activity">
    <reaction evidence="1">
        <text>L-threonylcarbamoyladenylate + adenosine(37) in tRNA = N(6)-L-threonylcarbamoyladenosine(37) in tRNA + AMP + H(+)</text>
        <dbReference type="Rhea" id="RHEA:37059"/>
        <dbReference type="Rhea" id="RHEA-COMP:10162"/>
        <dbReference type="Rhea" id="RHEA-COMP:10163"/>
        <dbReference type="ChEBI" id="CHEBI:15378"/>
        <dbReference type="ChEBI" id="CHEBI:73682"/>
        <dbReference type="ChEBI" id="CHEBI:74411"/>
        <dbReference type="ChEBI" id="CHEBI:74418"/>
        <dbReference type="ChEBI" id="CHEBI:456215"/>
        <dbReference type="EC" id="2.3.1.234"/>
    </reaction>
</comment>
<comment type="cofactor">
    <cofactor evidence="1">
        <name>Fe(2+)</name>
        <dbReference type="ChEBI" id="CHEBI:29033"/>
    </cofactor>
    <text evidence="1">Binds 1 Fe(2+) ion per subunit.</text>
</comment>
<comment type="subcellular location">
    <subcellularLocation>
        <location evidence="1">Cytoplasm</location>
    </subcellularLocation>
</comment>
<comment type="similarity">
    <text evidence="1">Belongs to the KAE1 / TsaD family.</text>
</comment>
<reference key="1">
    <citation type="submission" date="2007-10" db="EMBL/GenBank/DDBJ databases">
        <title>Complete sequence of chromosome 2 of Burkholderia multivorans ATCC 17616.</title>
        <authorList>
            <person name="Copeland A."/>
            <person name="Lucas S."/>
            <person name="Lapidus A."/>
            <person name="Barry K."/>
            <person name="Glavina del Rio T."/>
            <person name="Dalin E."/>
            <person name="Tice H."/>
            <person name="Pitluck S."/>
            <person name="Chain P."/>
            <person name="Malfatti S."/>
            <person name="Shin M."/>
            <person name="Vergez L."/>
            <person name="Schmutz J."/>
            <person name="Larimer F."/>
            <person name="Land M."/>
            <person name="Hauser L."/>
            <person name="Kyrpides N."/>
            <person name="Kim E."/>
            <person name="Tiedje J."/>
            <person name="Richardson P."/>
        </authorList>
    </citation>
    <scope>NUCLEOTIDE SEQUENCE [LARGE SCALE GENOMIC DNA]</scope>
    <source>
        <strain>ATCC 17616 / 249</strain>
    </source>
</reference>
<reference key="2">
    <citation type="submission" date="2007-04" db="EMBL/GenBank/DDBJ databases">
        <title>Complete genome sequence of Burkholderia multivorans ATCC 17616.</title>
        <authorList>
            <person name="Ohtsubo Y."/>
            <person name="Yamashita A."/>
            <person name="Kurokawa K."/>
            <person name="Takami H."/>
            <person name="Yuhara S."/>
            <person name="Nishiyama E."/>
            <person name="Endo R."/>
            <person name="Miyazaki R."/>
            <person name="Ono A."/>
            <person name="Yano K."/>
            <person name="Ito M."/>
            <person name="Sota M."/>
            <person name="Yuji N."/>
            <person name="Hattori M."/>
            <person name="Tsuda M."/>
        </authorList>
    </citation>
    <scope>NUCLEOTIDE SEQUENCE [LARGE SCALE GENOMIC DNA]</scope>
    <source>
        <strain>ATCC 17616 / 249</strain>
    </source>
</reference>
<dbReference type="EC" id="2.3.1.234" evidence="1"/>
<dbReference type="EMBL" id="CP000869">
    <property type="protein sequence ID" value="ABX18489.1"/>
    <property type="molecule type" value="Genomic_DNA"/>
</dbReference>
<dbReference type="EMBL" id="AP009386">
    <property type="protein sequence ID" value="BAG45570.1"/>
    <property type="molecule type" value="Genomic_DNA"/>
</dbReference>
<dbReference type="RefSeq" id="WP_006399455.1">
    <property type="nucleotide sequence ID" value="NC_010805.1"/>
</dbReference>
<dbReference type="SMR" id="A9ANA0"/>
<dbReference type="STRING" id="395019.BMULJ_03698"/>
<dbReference type="KEGG" id="bmj:BMULJ_03698"/>
<dbReference type="KEGG" id="bmu:Bmul_4818"/>
<dbReference type="eggNOG" id="COG0533">
    <property type="taxonomic scope" value="Bacteria"/>
</dbReference>
<dbReference type="HOGENOM" id="CLU_023208_0_0_4"/>
<dbReference type="Proteomes" id="UP000008815">
    <property type="component" value="Chromosome 2"/>
</dbReference>
<dbReference type="GO" id="GO:0005737">
    <property type="term" value="C:cytoplasm"/>
    <property type="evidence" value="ECO:0007669"/>
    <property type="project" value="UniProtKB-SubCell"/>
</dbReference>
<dbReference type="GO" id="GO:0005506">
    <property type="term" value="F:iron ion binding"/>
    <property type="evidence" value="ECO:0007669"/>
    <property type="project" value="UniProtKB-UniRule"/>
</dbReference>
<dbReference type="GO" id="GO:0061711">
    <property type="term" value="F:N(6)-L-threonylcarbamoyladenine synthase activity"/>
    <property type="evidence" value="ECO:0007669"/>
    <property type="project" value="UniProtKB-EC"/>
</dbReference>
<dbReference type="GO" id="GO:0002949">
    <property type="term" value="P:tRNA threonylcarbamoyladenosine modification"/>
    <property type="evidence" value="ECO:0007669"/>
    <property type="project" value="UniProtKB-UniRule"/>
</dbReference>
<dbReference type="CDD" id="cd24133">
    <property type="entry name" value="ASKHA_NBD_TsaD_bac"/>
    <property type="match status" value="1"/>
</dbReference>
<dbReference type="FunFam" id="3.30.420.40:FF:000012">
    <property type="entry name" value="tRNA N6-adenosine threonylcarbamoyltransferase"/>
    <property type="match status" value="1"/>
</dbReference>
<dbReference type="FunFam" id="3.30.420.40:FF:000040">
    <property type="entry name" value="tRNA N6-adenosine threonylcarbamoyltransferase"/>
    <property type="match status" value="1"/>
</dbReference>
<dbReference type="Gene3D" id="3.30.420.40">
    <property type="match status" value="2"/>
</dbReference>
<dbReference type="HAMAP" id="MF_01445">
    <property type="entry name" value="TsaD"/>
    <property type="match status" value="1"/>
</dbReference>
<dbReference type="InterPro" id="IPR043129">
    <property type="entry name" value="ATPase_NBD"/>
</dbReference>
<dbReference type="InterPro" id="IPR000905">
    <property type="entry name" value="Gcp-like_dom"/>
</dbReference>
<dbReference type="InterPro" id="IPR017861">
    <property type="entry name" value="KAE1/TsaD"/>
</dbReference>
<dbReference type="InterPro" id="IPR022450">
    <property type="entry name" value="TsaD"/>
</dbReference>
<dbReference type="NCBIfam" id="TIGR00329">
    <property type="entry name" value="gcp_kae1"/>
    <property type="match status" value="1"/>
</dbReference>
<dbReference type="NCBIfam" id="TIGR03723">
    <property type="entry name" value="T6A_TsaD_YgjD"/>
    <property type="match status" value="1"/>
</dbReference>
<dbReference type="PANTHER" id="PTHR11735">
    <property type="entry name" value="TRNA N6-ADENOSINE THREONYLCARBAMOYLTRANSFERASE"/>
    <property type="match status" value="1"/>
</dbReference>
<dbReference type="PANTHER" id="PTHR11735:SF6">
    <property type="entry name" value="TRNA N6-ADENOSINE THREONYLCARBAMOYLTRANSFERASE, MITOCHONDRIAL"/>
    <property type="match status" value="1"/>
</dbReference>
<dbReference type="Pfam" id="PF00814">
    <property type="entry name" value="TsaD"/>
    <property type="match status" value="1"/>
</dbReference>
<dbReference type="PRINTS" id="PR00789">
    <property type="entry name" value="OSIALOPTASE"/>
</dbReference>
<dbReference type="SUPFAM" id="SSF53067">
    <property type="entry name" value="Actin-like ATPase domain"/>
    <property type="match status" value="2"/>
</dbReference>
<organism>
    <name type="scientific">Burkholderia multivorans (strain ATCC 17616 / 249)</name>
    <dbReference type="NCBI Taxonomy" id="395019"/>
    <lineage>
        <taxon>Bacteria</taxon>
        <taxon>Pseudomonadati</taxon>
        <taxon>Pseudomonadota</taxon>
        <taxon>Betaproteobacteria</taxon>
        <taxon>Burkholderiales</taxon>
        <taxon>Burkholderiaceae</taxon>
        <taxon>Burkholderia</taxon>
        <taxon>Burkholderia cepacia complex</taxon>
    </lineage>
</organism>
<accession>A9ANA0</accession>
<name>TSAD_BURM1</name>
<proteinExistence type="inferred from homology"/>
<gene>
    <name evidence="1" type="primary">tsaD</name>
    <name type="synonym">gcp</name>
    <name type="ordered locus">Bmul_4818</name>
    <name type="ordered locus">BMULJ_03698</name>
</gene>
<keyword id="KW-0012">Acyltransferase</keyword>
<keyword id="KW-0963">Cytoplasm</keyword>
<keyword id="KW-0408">Iron</keyword>
<keyword id="KW-0479">Metal-binding</keyword>
<keyword id="KW-1185">Reference proteome</keyword>
<keyword id="KW-0808">Transferase</keyword>
<keyword id="KW-0819">tRNA processing</keyword>
<feature type="chain" id="PRO_1000145957" description="tRNA N6-adenosine threonylcarbamoyltransferase">
    <location>
        <begin position="1"/>
        <end position="346"/>
    </location>
</feature>
<feature type="binding site" evidence="1">
    <location>
        <position position="111"/>
    </location>
    <ligand>
        <name>Fe cation</name>
        <dbReference type="ChEBI" id="CHEBI:24875"/>
    </ligand>
</feature>
<feature type="binding site" evidence="1">
    <location>
        <position position="115"/>
    </location>
    <ligand>
        <name>Fe cation</name>
        <dbReference type="ChEBI" id="CHEBI:24875"/>
    </ligand>
</feature>
<feature type="binding site" evidence="1">
    <location>
        <begin position="134"/>
        <end position="138"/>
    </location>
    <ligand>
        <name>substrate</name>
    </ligand>
</feature>
<feature type="binding site" evidence="1">
    <location>
        <position position="167"/>
    </location>
    <ligand>
        <name>substrate</name>
    </ligand>
</feature>
<feature type="binding site" evidence="1">
    <location>
        <position position="180"/>
    </location>
    <ligand>
        <name>substrate</name>
    </ligand>
</feature>
<feature type="binding site" evidence="1">
    <location>
        <position position="279"/>
    </location>
    <ligand>
        <name>substrate</name>
    </ligand>
</feature>
<feature type="binding site" evidence="1">
    <location>
        <position position="307"/>
    </location>
    <ligand>
        <name>Fe cation</name>
        <dbReference type="ChEBI" id="CHEBI:24875"/>
    </ligand>
</feature>
<protein>
    <recommendedName>
        <fullName evidence="1">tRNA N6-adenosine threonylcarbamoyltransferase</fullName>
        <ecNumber evidence="1">2.3.1.234</ecNumber>
    </recommendedName>
    <alternativeName>
        <fullName evidence="1">N6-L-threonylcarbamoyladenine synthase</fullName>
        <shortName evidence="1">t(6)A synthase</shortName>
    </alternativeName>
    <alternativeName>
        <fullName evidence="1">t(6)A37 threonylcarbamoyladenosine biosynthesis protein TsaD</fullName>
    </alternativeName>
    <alternativeName>
        <fullName evidence="1">tRNA threonylcarbamoyladenosine biosynthesis protein TsaD</fullName>
    </alternativeName>
</protein>